<reference key="1">
    <citation type="journal article" date="2009" name="Genome Res.">
        <title>Newly introduced genomic prophage islands are critical determinants of in vivo competitiveness in the Liverpool epidemic strain of Pseudomonas aeruginosa.</title>
        <authorList>
            <person name="Winstanley C."/>
            <person name="Langille M.G.I."/>
            <person name="Fothergill J.L."/>
            <person name="Kukavica-Ibrulj I."/>
            <person name="Paradis-Bleau C."/>
            <person name="Sanschagrin F."/>
            <person name="Thomson N.R."/>
            <person name="Winsor G.L."/>
            <person name="Quail M.A."/>
            <person name="Lennard N."/>
            <person name="Bignell A."/>
            <person name="Clarke L."/>
            <person name="Seeger K."/>
            <person name="Saunders D."/>
            <person name="Harris D."/>
            <person name="Parkhill J."/>
            <person name="Hancock R.E.W."/>
            <person name="Brinkman F.S.L."/>
            <person name="Levesque R.C."/>
        </authorList>
    </citation>
    <scope>NUCLEOTIDE SEQUENCE [LARGE SCALE GENOMIC DNA]</scope>
    <source>
        <strain>LESB58</strain>
    </source>
</reference>
<accession>B7UVV5</accession>
<sequence length="405" mass="45298">MADVKKVVLAYSGGLDTSVILKWLQDTYNCEVVTFTADLGQGEEVEPARAKARAMGVKEIYIDDLREEFVRDFVYPMFRANTVYEGEYLLGTSIARPLIAKRLIEIANETGADAISHGATGKGNDQVRFELGAYALKPGVKVIAPWREWDLLSREKLMDYAEKHGIPIERHGKKKSPYSMDANLLHISYEGGVLEDTWTEHEEDMWKWTASPENAPDTPTYIELTYRKGDIVAIDGKDMTPAEVLTELNRVGGINGIGRLDIVENRYVGMKSRGCYETPGGTIMLKAHRAIESITLDREVAHLKDELMPKYASLIYTGYWWSPERLMLQQMIDASQVNVNGVVRLKLYKGNVVVVGRKSDDSLFDANIATFEEDGGAYNQADAAGFIKLNALRMRIAANKGRTLS</sequence>
<comment type="catalytic activity">
    <reaction evidence="1">
        <text>L-citrulline + L-aspartate + ATP = 2-(N(omega)-L-arginino)succinate + AMP + diphosphate + H(+)</text>
        <dbReference type="Rhea" id="RHEA:10932"/>
        <dbReference type="ChEBI" id="CHEBI:15378"/>
        <dbReference type="ChEBI" id="CHEBI:29991"/>
        <dbReference type="ChEBI" id="CHEBI:30616"/>
        <dbReference type="ChEBI" id="CHEBI:33019"/>
        <dbReference type="ChEBI" id="CHEBI:57472"/>
        <dbReference type="ChEBI" id="CHEBI:57743"/>
        <dbReference type="ChEBI" id="CHEBI:456215"/>
        <dbReference type="EC" id="6.3.4.5"/>
    </reaction>
</comment>
<comment type="pathway">
    <text evidence="1">Amino-acid biosynthesis; L-arginine biosynthesis; L-arginine from L-ornithine and carbamoyl phosphate: step 2/3.</text>
</comment>
<comment type="subunit">
    <text evidence="1">Homotetramer.</text>
</comment>
<comment type="subcellular location">
    <subcellularLocation>
        <location evidence="1">Cytoplasm</location>
    </subcellularLocation>
</comment>
<comment type="similarity">
    <text evidence="1">Belongs to the argininosuccinate synthase family. Type 1 subfamily.</text>
</comment>
<organism>
    <name type="scientific">Pseudomonas aeruginosa (strain LESB58)</name>
    <dbReference type="NCBI Taxonomy" id="557722"/>
    <lineage>
        <taxon>Bacteria</taxon>
        <taxon>Pseudomonadati</taxon>
        <taxon>Pseudomonadota</taxon>
        <taxon>Gammaproteobacteria</taxon>
        <taxon>Pseudomonadales</taxon>
        <taxon>Pseudomonadaceae</taxon>
        <taxon>Pseudomonas</taxon>
    </lineage>
</organism>
<protein>
    <recommendedName>
        <fullName evidence="1">Argininosuccinate synthase</fullName>
        <ecNumber evidence="1">6.3.4.5</ecNumber>
    </recommendedName>
    <alternativeName>
        <fullName evidence="1">Citrulline--aspartate ligase</fullName>
    </alternativeName>
</protein>
<feature type="chain" id="PRO_1000116192" description="Argininosuccinate synthase">
    <location>
        <begin position="1"/>
        <end position="405"/>
    </location>
</feature>
<feature type="binding site" evidence="1">
    <location>
        <begin position="10"/>
        <end position="18"/>
    </location>
    <ligand>
        <name>ATP</name>
        <dbReference type="ChEBI" id="CHEBI:30616"/>
    </ligand>
</feature>
<feature type="binding site" evidence="1">
    <location>
        <position position="37"/>
    </location>
    <ligand>
        <name>ATP</name>
        <dbReference type="ChEBI" id="CHEBI:30616"/>
    </ligand>
</feature>
<feature type="binding site" evidence="1">
    <location>
        <position position="88"/>
    </location>
    <ligand>
        <name>L-citrulline</name>
        <dbReference type="ChEBI" id="CHEBI:57743"/>
    </ligand>
</feature>
<feature type="binding site" evidence="1">
    <location>
        <position position="93"/>
    </location>
    <ligand>
        <name>L-citrulline</name>
        <dbReference type="ChEBI" id="CHEBI:57743"/>
    </ligand>
</feature>
<feature type="binding site" evidence="1">
    <location>
        <position position="118"/>
    </location>
    <ligand>
        <name>ATP</name>
        <dbReference type="ChEBI" id="CHEBI:30616"/>
    </ligand>
</feature>
<feature type="binding site" evidence="1">
    <location>
        <position position="120"/>
    </location>
    <ligand>
        <name>L-aspartate</name>
        <dbReference type="ChEBI" id="CHEBI:29991"/>
    </ligand>
</feature>
<feature type="binding site" evidence="1">
    <location>
        <position position="124"/>
    </location>
    <ligand>
        <name>L-aspartate</name>
        <dbReference type="ChEBI" id="CHEBI:29991"/>
    </ligand>
</feature>
<feature type="binding site" evidence="1">
    <location>
        <position position="124"/>
    </location>
    <ligand>
        <name>L-citrulline</name>
        <dbReference type="ChEBI" id="CHEBI:57743"/>
    </ligand>
</feature>
<feature type="binding site" evidence="1">
    <location>
        <position position="125"/>
    </location>
    <ligand>
        <name>L-aspartate</name>
        <dbReference type="ChEBI" id="CHEBI:29991"/>
    </ligand>
</feature>
<feature type="binding site" evidence="1">
    <location>
        <position position="128"/>
    </location>
    <ligand>
        <name>L-citrulline</name>
        <dbReference type="ChEBI" id="CHEBI:57743"/>
    </ligand>
</feature>
<feature type="binding site" evidence="1">
    <location>
        <position position="179"/>
    </location>
    <ligand>
        <name>L-citrulline</name>
        <dbReference type="ChEBI" id="CHEBI:57743"/>
    </ligand>
</feature>
<feature type="binding site" evidence="1">
    <location>
        <position position="188"/>
    </location>
    <ligand>
        <name>L-citrulline</name>
        <dbReference type="ChEBI" id="CHEBI:57743"/>
    </ligand>
</feature>
<feature type="binding site" evidence="1">
    <location>
        <position position="264"/>
    </location>
    <ligand>
        <name>L-citrulline</name>
        <dbReference type="ChEBI" id="CHEBI:57743"/>
    </ligand>
</feature>
<feature type="binding site" evidence="1">
    <location>
        <position position="276"/>
    </location>
    <ligand>
        <name>L-citrulline</name>
        <dbReference type="ChEBI" id="CHEBI:57743"/>
    </ligand>
</feature>
<gene>
    <name evidence="1" type="primary">argG</name>
    <name type="ordered locus">PLES_15081</name>
</gene>
<name>ASSY_PSEA8</name>
<dbReference type="EC" id="6.3.4.5" evidence="1"/>
<dbReference type="EMBL" id="FM209186">
    <property type="protein sequence ID" value="CAW26236.1"/>
    <property type="molecule type" value="Genomic_DNA"/>
</dbReference>
<dbReference type="RefSeq" id="WP_003092065.1">
    <property type="nucleotide sequence ID" value="NC_011770.1"/>
</dbReference>
<dbReference type="SMR" id="B7UVV5"/>
<dbReference type="KEGG" id="pag:PLES_15081"/>
<dbReference type="HOGENOM" id="CLU_032784_4_2_6"/>
<dbReference type="UniPathway" id="UPA00068">
    <property type="reaction ID" value="UER00113"/>
</dbReference>
<dbReference type="GO" id="GO:0005737">
    <property type="term" value="C:cytoplasm"/>
    <property type="evidence" value="ECO:0007669"/>
    <property type="project" value="UniProtKB-SubCell"/>
</dbReference>
<dbReference type="GO" id="GO:0004055">
    <property type="term" value="F:argininosuccinate synthase activity"/>
    <property type="evidence" value="ECO:0007669"/>
    <property type="project" value="UniProtKB-UniRule"/>
</dbReference>
<dbReference type="GO" id="GO:0005524">
    <property type="term" value="F:ATP binding"/>
    <property type="evidence" value="ECO:0007669"/>
    <property type="project" value="UniProtKB-UniRule"/>
</dbReference>
<dbReference type="GO" id="GO:0000053">
    <property type="term" value="P:argininosuccinate metabolic process"/>
    <property type="evidence" value="ECO:0007669"/>
    <property type="project" value="TreeGrafter"/>
</dbReference>
<dbReference type="GO" id="GO:0006526">
    <property type="term" value="P:L-arginine biosynthetic process"/>
    <property type="evidence" value="ECO:0007669"/>
    <property type="project" value="UniProtKB-UniRule"/>
</dbReference>
<dbReference type="GO" id="GO:0000050">
    <property type="term" value="P:urea cycle"/>
    <property type="evidence" value="ECO:0007669"/>
    <property type="project" value="TreeGrafter"/>
</dbReference>
<dbReference type="CDD" id="cd01999">
    <property type="entry name" value="ASS"/>
    <property type="match status" value="1"/>
</dbReference>
<dbReference type="FunFam" id="1.20.5.470:FF:000001">
    <property type="entry name" value="Argininosuccinate synthase"/>
    <property type="match status" value="1"/>
</dbReference>
<dbReference type="FunFam" id="3.40.50.620:FF:000019">
    <property type="entry name" value="Argininosuccinate synthase"/>
    <property type="match status" value="1"/>
</dbReference>
<dbReference type="FunFam" id="3.90.1260.10:FF:000001">
    <property type="entry name" value="Argininosuccinate synthase"/>
    <property type="match status" value="1"/>
</dbReference>
<dbReference type="Gene3D" id="3.90.1260.10">
    <property type="entry name" value="Argininosuccinate synthetase, chain A, domain 2"/>
    <property type="match status" value="1"/>
</dbReference>
<dbReference type="Gene3D" id="3.40.50.620">
    <property type="entry name" value="HUPs"/>
    <property type="match status" value="1"/>
</dbReference>
<dbReference type="Gene3D" id="1.20.5.470">
    <property type="entry name" value="Single helix bin"/>
    <property type="match status" value="1"/>
</dbReference>
<dbReference type="HAMAP" id="MF_00005">
    <property type="entry name" value="Arg_succ_synth_type1"/>
    <property type="match status" value="1"/>
</dbReference>
<dbReference type="InterPro" id="IPR048268">
    <property type="entry name" value="Arginosuc_syn_C"/>
</dbReference>
<dbReference type="InterPro" id="IPR048267">
    <property type="entry name" value="Arginosuc_syn_N"/>
</dbReference>
<dbReference type="InterPro" id="IPR001518">
    <property type="entry name" value="Arginosuc_synth"/>
</dbReference>
<dbReference type="InterPro" id="IPR018223">
    <property type="entry name" value="Arginosuc_synth_CS"/>
</dbReference>
<dbReference type="InterPro" id="IPR023434">
    <property type="entry name" value="Arginosuc_synth_type_1_subfam"/>
</dbReference>
<dbReference type="InterPro" id="IPR024074">
    <property type="entry name" value="AS_cat/multimer_dom_body"/>
</dbReference>
<dbReference type="InterPro" id="IPR014729">
    <property type="entry name" value="Rossmann-like_a/b/a_fold"/>
</dbReference>
<dbReference type="NCBIfam" id="TIGR00032">
    <property type="entry name" value="argG"/>
    <property type="match status" value="1"/>
</dbReference>
<dbReference type="NCBIfam" id="NF001770">
    <property type="entry name" value="PRK00509.1"/>
    <property type="match status" value="1"/>
</dbReference>
<dbReference type="PANTHER" id="PTHR11587">
    <property type="entry name" value="ARGININOSUCCINATE SYNTHASE"/>
    <property type="match status" value="1"/>
</dbReference>
<dbReference type="PANTHER" id="PTHR11587:SF2">
    <property type="entry name" value="ARGININOSUCCINATE SYNTHASE"/>
    <property type="match status" value="1"/>
</dbReference>
<dbReference type="Pfam" id="PF20979">
    <property type="entry name" value="Arginosuc_syn_C"/>
    <property type="match status" value="1"/>
</dbReference>
<dbReference type="Pfam" id="PF00764">
    <property type="entry name" value="Arginosuc_synth"/>
    <property type="match status" value="1"/>
</dbReference>
<dbReference type="SUPFAM" id="SSF52402">
    <property type="entry name" value="Adenine nucleotide alpha hydrolases-like"/>
    <property type="match status" value="1"/>
</dbReference>
<dbReference type="SUPFAM" id="SSF69864">
    <property type="entry name" value="Argininosuccinate synthetase, C-terminal domain"/>
    <property type="match status" value="1"/>
</dbReference>
<dbReference type="PROSITE" id="PS00564">
    <property type="entry name" value="ARGININOSUCCIN_SYN_1"/>
    <property type="match status" value="1"/>
</dbReference>
<dbReference type="PROSITE" id="PS00565">
    <property type="entry name" value="ARGININOSUCCIN_SYN_2"/>
    <property type="match status" value="1"/>
</dbReference>
<evidence type="ECO:0000255" key="1">
    <source>
        <dbReference type="HAMAP-Rule" id="MF_00005"/>
    </source>
</evidence>
<proteinExistence type="inferred from homology"/>
<keyword id="KW-0028">Amino-acid biosynthesis</keyword>
<keyword id="KW-0055">Arginine biosynthesis</keyword>
<keyword id="KW-0067">ATP-binding</keyword>
<keyword id="KW-0963">Cytoplasm</keyword>
<keyword id="KW-0436">Ligase</keyword>
<keyword id="KW-0547">Nucleotide-binding</keyword>